<name>RBR1_CANAL</name>
<comment type="function">
    <text evidence="4">Probable cell wall protein required for filamentation at low pH.</text>
</comment>
<comment type="subcellular location">
    <subcellularLocation>
        <location evidence="7">Secreted</location>
        <location evidence="7">Cell wall</location>
    </subcellularLocation>
    <subcellularLocation>
        <location evidence="7">Membrane</location>
        <topology evidence="7">Lipid-anchor</topology>
        <topology evidence="7">GPI-anchor</topology>
    </subcellularLocation>
</comment>
<comment type="induction">
    <text evidence="4 5 6">Expressed under acidic conditions. Expression is positively regulated by HAP43 and NRG1, and repressed by RIM101. Expression is also controlled by SUR7.</text>
</comment>
<comment type="PTM">
    <text evidence="1">The GPI-anchor is attached to the protein in the endoplasmic reticulum and serves to target the protein to the cell surface. There, the glucosamine-inositol phospholipid moiety is cleaved off and the GPI-modified mannoprotein is covalently attached via its lipidless GPI glycan remnant to the 1,6-beta-glucan of the outer cell wall layer (By similarity).</text>
</comment>
<protein>
    <recommendedName>
        <fullName>Repressed By RIM101 protein 1</fullName>
    </recommendedName>
    <alternativeName>
        <fullName>Predicted GPI-anchored protein 20</fullName>
    </alternativeName>
</protein>
<sequence>MKFSTTLLALTASIAAVMSADSSAAASGAASAASGAKSGATSAASGAKSGASSVASAAKSGVSSAASAAKSGASSATGGSSAAKSGSSSGAGFAPVAGAGSLAAIAGLLLL</sequence>
<accession>Q5A6M0</accession>
<accession>A0A1D8PSS8</accession>
<dbReference type="EMBL" id="CP017630">
    <property type="protein sequence ID" value="AOW31180.1"/>
    <property type="molecule type" value="Genomic_DNA"/>
</dbReference>
<dbReference type="RefSeq" id="XP_717398.1">
    <property type="nucleotide sequence ID" value="XM_712305.2"/>
</dbReference>
<dbReference type="STRING" id="237561.Q5A6M0"/>
<dbReference type="EnsemblFungi" id="CR_04440C_A-T">
    <property type="protein sequence ID" value="CR_04440C_A-T-p1"/>
    <property type="gene ID" value="CR_04440C_A"/>
</dbReference>
<dbReference type="GeneID" id="3640986"/>
<dbReference type="KEGG" id="cal:CAALFM_CR04440CA"/>
<dbReference type="CGD" id="CAL0000198834">
    <property type="gene designation" value="RBR1"/>
</dbReference>
<dbReference type="VEuPathDB" id="FungiDB:CR_04440C_A"/>
<dbReference type="HOGENOM" id="CLU_169106_0_0_1"/>
<dbReference type="InParanoid" id="Q5A6M0"/>
<dbReference type="OMA" id="MANIECE"/>
<dbReference type="PHI-base" id="PHI:11395"/>
<dbReference type="PRO" id="PR:Q5A6M0"/>
<dbReference type="Proteomes" id="UP000000559">
    <property type="component" value="Chromosome R"/>
</dbReference>
<dbReference type="GO" id="GO:0005576">
    <property type="term" value="C:extracellular region"/>
    <property type="evidence" value="ECO:0007669"/>
    <property type="project" value="UniProtKB-KW"/>
</dbReference>
<dbReference type="GO" id="GO:0098552">
    <property type="term" value="C:side of membrane"/>
    <property type="evidence" value="ECO:0007669"/>
    <property type="project" value="UniProtKB-KW"/>
</dbReference>
<dbReference type="GO" id="GO:0036244">
    <property type="term" value="P:cellular response to neutral pH"/>
    <property type="evidence" value="ECO:0000315"/>
    <property type="project" value="CGD"/>
</dbReference>
<dbReference type="GO" id="GO:0030447">
    <property type="term" value="P:filamentous growth"/>
    <property type="evidence" value="ECO:0000315"/>
    <property type="project" value="CGD"/>
</dbReference>
<dbReference type="GO" id="GO:0036178">
    <property type="term" value="P:filamentous growth of a population of unicellular organisms in response to neutral pH"/>
    <property type="evidence" value="ECO:0000315"/>
    <property type="project" value="CGD"/>
</dbReference>
<dbReference type="Gene3D" id="1.10.287.700">
    <property type="entry name" value="Helix hairpin bin"/>
    <property type="match status" value="1"/>
</dbReference>
<dbReference type="InterPro" id="IPR001058">
    <property type="entry name" value="Synuclein"/>
</dbReference>
<dbReference type="PRINTS" id="PR01211">
    <property type="entry name" value="SYNUCLEIN"/>
</dbReference>
<feature type="signal peptide" evidence="2">
    <location>
        <begin position="1"/>
        <end position="19"/>
    </location>
</feature>
<feature type="chain" id="PRO_0000424779" description="Repressed By RIM101 protein 1">
    <location>
        <begin position="20"/>
        <end position="81"/>
    </location>
</feature>
<feature type="propeptide" id="PRO_0000424780" description="Removed in mature form" evidence="2">
    <location>
        <begin position="82"/>
        <end position="111"/>
    </location>
</feature>
<feature type="region of interest" description="Disordered" evidence="3">
    <location>
        <begin position="71"/>
        <end position="90"/>
    </location>
</feature>
<feature type="lipid moiety-binding region" description="GPI-anchor amidated serine" evidence="2">
    <location>
        <position position="81"/>
    </location>
</feature>
<gene>
    <name type="primary">RBR1</name>
    <name type="synonym">PGA20</name>
    <name type="ordered locus">CAALFM_CR04440CA</name>
    <name type="ORF">CaO19.535</name>
    <name type="ORF">CaO19.8168</name>
</gene>
<reference key="1">
    <citation type="journal article" date="2004" name="Proc. Natl. Acad. Sci. U.S.A.">
        <title>The diploid genome sequence of Candida albicans.</title>
        <authorList>
            <person name="Jones T."/>
            <person name="Federspiel N.A."/>
            <person name="Chibana H."/>
            <person name="Dungan J."/>
            <person name="Kalman S."/>
            <person name="Magee B.B."/>
            <person name="Newport G."/>
            <person name="Thorstenson Y.R."/>
            <person name="Agabian N."/>
            <person name="Magee P.T."/>
            <person name="Davis R.W."/>
            <person name="Scherer S."/>
        </authorList>
    </citation>
    <scope>NUCLEOTIDE SEQUENCE [LARGE SCALE GENOMIC DNA]</scope>
    <source>
        <strain>SC5314 / ATCC MYA-2876</strain>
    </source>
</reference>
<reference key="2">
    <citation type="journal article" date="2007" name="Genome Biol.">
        <title>Assembly of the Candida albicans genome into sixteen supercontigs aligned on the eight chromosomes.</title>
        <authorList>
            <person name="van het Hoog M."/>
            <person name="Rast T.J."/>
            <person name="Martchenko M."/>
            <person name="Grindle S."/>
            <person name="Dignard D."/>
            <person name="Hogues H."/>
            <person name="Cuomo C."/>
            <person name="Berriman M."/>
            <person name="Scherer S."/>
            <person name="Magee B.B."/>
            <person name="Whiteway M."/>
            <person name="Chibana H."/>
            <person name="Nantel A."/>
            <person name="Magee P.T."/>
        </authorList>
    </citation>
    <scope>GENOME REANNOTATION</scope>
    <source>
        <strain>SC5314 / ATCC MYA-2876</strain>
    </source>
</reference>
<reference key="3">
    <citation type="journal article" date="2013" name="Genome Biol.">
        <title>Assembly of a phased diploid Candida albicans genome facilitates allele-specific measurements and provides a simple model for repeat and indel structure.</title>
        <authorList>
            <person name="Muzzey D."/>
            <person name="Schwartz K."/>
            <person name="Weissman J.S."/>
            <person name="Sherlock G."/>
        </authorList>
    </citation>
    <scope>NUCLEOTIDE SEQUENCE [LARGE SCALE GENOMIC DNA]</scope>
    <scope>GENOME REANNOTATION</scope>
    <source>
        <strain>SC5314 / ATCC MYA-2876</strain>
    </source>
</reference>
<reference key="4">
    <citation type="journal article" date="2003" name="Yeast">
        <title>Genome-wide identification of fungal GPI proteins.</title>
        <authorList>
            <person name="De Groot P.W."/>
            <person name="Hellingwerf K.J."/>
            <person name="Klis F.M."/>
        </authorList>
    </citation>
    <scope>PREDICTION OF GPI-ANCHOR</scope>
</reference>
<reference key="5">
    <citation type="journal article" date="2004" name="Eukaryot. Cell">
        <title>RBR1, a novel pH-regulated cell wall gene of Candida albicans, is repressed by RIM101 and activated by NRG1.</title>
        <authorList>
            <person name="Lotz H."/>
            <person name="Sohn K."/>
            <person name="Brunner H."/>
            <person name="Muhlschlegel F.A."/>
            <person name="Rupp S."/>
        </authorList>
    </citation>
    <scope>INDUCTION</scope>
    <scope>FUNCTION</scope>
</reference>
<reference key="6">
    <citation type="journal article" date="2008" name="Mol. Biol. Cell">
        <title>The Sur7 protein regulates plasma membrane organization and prevents intracellular cell wall growth in Candida albicans.</title>
        <authorList>
            <person name="Alvarez F.J."/>
            <person name="Douglas L.M."/>
            <person name="Rosebrock A."/>
            <person name="Konopka J.B."/>
        </authorList>
    </citation>
    <scope>INDUCTION</scope>
</reference>
<reference key="7">
    <citation type="journal article" date="2011" name="J. Biol. Chem.">
        <title>Cap2-HAP complex is a critical transcriptional regulator that has dual but contrasting roles in regulation of iron homeostasis in Candida albicans.</title>
        <authorList>
            <person name="Singh R.P."/>
            <person name="Prasad H.K."/>
            <person name="Sinha I."/>
            <person name="Agarwal N."/>
            <person name="Natarajan K."/>
        </authorList>
    </citation>
    <scope>INDUCTION</scope>
</reference>
<organism>
    <name type="scientific">Candida albicans (strain SC5314 / ATCC MYA-2876)</name>
    <name type="common">Yeast</name>
    <dbReference type="NCBI Taxonomy" id="237561"/>
    <lineage>
        <taxon>Eukaryota</taxon>
        <taxon>Fungi</taxon>
        <taxon>Dikarya</taxon>
        <taxon>Ascomycota</taxon>
        <taxon>Saccharomycotina</taxon>
        <taxon>Pichiomycetes</taxon>
        <taxon>Debaryomycetaceae</taxon>
        <taxon>Candida/Lodderomyces clade</taxon>
        <taxon>Candida</taxon>
    </lineage>
</organism>
<proteinExistence type="evidence at protein level"/>
<keyword id="KW-0134">Cell wall</keyword>
<keyword id="KW-0325">Glycoprotein</keyword>
<keyword id="KW-0336">GPI-anchor</keyword>
<keyword id="KW-0449">Lipoprotein</keyword>
<keyword id="KW-0472">Membrane</keyword>
<keyword id="KW-1185">Reference proteome</keyword>
<keyword id="KW-0964">Secreted</keyword>
<keyword id="KW-0732">Signal</keyword>
<evidence type="ECO:0000250" key="1"/>
<evidence type="ECO:0000255" key="2"/>
<evidence type="ECO:0000256" key="3">
    <source>
        <dbReference type="SAM" id="MobiDB-lite"/>
    </source>
</evidence>
<evidence type="ECO:0000269" key="4">
    <source>
    </source>
</evidence>
<evidence type="ECO:0000269" key="5">
    <source>
    </source>
</evidence>
<evidence type="ECO:0000269" key="6">
    <source>
    </source>
</evidence>
<evidence type="ECO:0000305" key="7"/>